<accession>P62524</accession>
<accession>P03060</accession>
<feature type="peptide" id="PRO_0000044752" description="ilv operon leader peptide">
    <location>
        <begin position="1"/>
        <end position="32"/>
    </location>
</feature>
<proteinExistence type="predicted"/>
<gene>
    <name type="primary">ilvL</name>
    <name type="ordered locus">Z5278</name>
    <name type="ordered locus">ECs4701</name>
</gene>
<keyword id="KW-0028">Amino-acid biosynthesis</keyword>
<keyword id="KW-0100">Branched-chain amino acid biosynthesis</keyword>
<keyword id="KW-0428">Leader peptide</keyword>
<keyword id="KW-1185">Reference proteome</keyword>
<name>LPID_ECO57</name>
<reference key="1">
    <citation type="journal article" date="2001" name="Nature">
        <title>Genome sequence of enterohaemorrhagic Escherichia coli O157:H7.</title>
        <authorList>
            <person name="Perna N.T."/>
            <person name="Plunkett G. III"/>
            <person name="Burland V."/>
            <person name="Mau B."/>
            <person name="Glasner J.D."/>
            <person name="Rose D.J."/>
            <person name="Mayhew G.F."/>
            <person name="Evans P.S."/>
            <person name="Gregor J."/>
            <person name="Kirkpatrick H.A."/>
            <person name="Posfai G."/>
            <person name="Hackett J."/>
            <person name="Klink S."/>
            <person name="Boutin A."/>
            <person name="Shao Y."/>
            <person name="Miller L."/>
            <person name="Grotbeck E.J."/>
            <person name="Davis N.W."/>
            <person name="Lim A."/>
            <person name="Dimalanta E.T."/>
            <person name="Potamousis K."/>
            <person name="Apodaca J."/>
            <person name="Anantharaman T.S."/>
            <person name="Lin J."/>
            <person name="Yen G."/>
            <person name="Schwartz D.C."/>
            <person name="Welch R.A."/>
            <person name="Blattner F.R."/>
        </authorList>
    </citation>
    <scope>NUCLEOTIDE SEQUENCE [LARGE SCALE GENOMIC DNA]</scope>
    <source>
        <strain>O157:H7 / EDL933 / ATCC 700927 / EHEC</strain>
    </source>
</reference>
<reference key="2">
    <citation type="journal article" date="2001" name="DNA Res.">
        <title>Complete genome sequence of enterohemorrhagic Escherichia coli O157:H7 and genomic comparison with a laboratory strain K-12.</title>
        <authorList>
            <person name="Hayashi T."/>
            <person name="Makino K."/>
            <person name="Ohnishi M."/>
            <person name="Kurokawa K."/>
            <person name="Ishii K."/>
            <person name="Yokoyama K."/>
            <person name="Han C.-G."/>
            <person name="Ohtsubo E."/>
            <person name="Nakayama K."/>
            <person name="Murata T."/>
            <person name="Tanaka M."/>
            <person name="Tobe T."/>
            <person name="Iida T."/>
            <person name="Takami H."/>
            <person name="Honda T."/>
            <person name="Sasakawa C."/>
            <person name="Ogasawara N."/>
            <person name="Yasunaga T."/>
            <person name="Kuhara S."/>
            <person name="Shiba T."/>
            <person name="Hattori M."/>
            <person name="Shinagawa H."/>
        </authorList>
    </citation>
    <scope>NUCLEOTIDE SEQUENCE [LARGE SCALE GENOMIC DNA]</scope>
    <source>
        <strain>O157:H7 / Sakai / RIMD 0509952 / EHEC</strain>
    </source>
</reference>
<sequence>MTALLRVISLVVISVVVIIIPPCGAALGRGKA</sequence>
<organism>
    <name type="scientific">Escherichia coli O157:H7</name>
    <dbReference type="NCBI Taxonomy" id="83334"/>
    <lineage>
        <taxon>Bacteria</taxon>
        <taxon>Pseudomonadati</taxon>
        <taxon>Pseudomonadota</taxon>
        <taxon>Gammaproteobacteria</taxon>
        <taxon>Enterobacterales</taxon>
        <taxon>Enterobacteriaceae</taxon>
        <taxon>Escherichia</taxon>
    </lineage>
</organism>
<protein>
    <recommendedName>
        <fullName>ilv operon leader peptide</fullName>
    </recommendedName>
    <alternativeName>
        <fullName>ilvGMEDA operon attenuator peptide</fullName>
    </alternativeName>
</protein>
<dbReference type="EMBL" id="AE005174">
    <property type="protein sequence ID" value="AAG58962.1"/>
    <property type="molecule type" value="Genomic_DNA"/>
</dbReference>
<dbReference type="EMBL" id="BA000007">
    <property type="protein sequence ID" value="BAB38124.1"/>
    <property type="molecule type" value="Genomic_DNA"/>
</dbReference>
<dbReference type="PIR" id="E91216">
    <property type="entry name" value="E91216"/>
</dbReference>
<dbReference type="PIR" id="F86062">
    <property type="entry name" value="F86062"/>
</dbReference>
<dbReference type="RefSeq" id="NP_312728.1">
    <property type="nucleotide sequence ID" value="NC_002695.1"/>
</dbReference>
<dbReference type="RefSeq" id="WP_001311244.1">
    <property type="nucleotide sequence ID" value="NZ_VOAI01000017.1"/>
</dbReference>
<dbReference type="STRING" id="155864.Z5278"/>
<dbReference type="GeneID" id="98391002"/>
<dbReference type="KEGG" id="ece:Z5278"/>
<dbReference type="KEGG" id="ecs:ECs_4701"/>
<dbReference type="PATRIC" id="fig|83334.175.peg.2361"/>
<dbReference type="HOGENOM" id="CLU_220955_0_0_6"/>
<dbReference type="Proteomes" id="UP000000558">
    <property type="component" value="Chromosome"/>
</dbReference>
<dbReference type="Proteomes" id="UP000002519">
    <property type="component" value="Chromosome"/>
</dbReference>
<dbReference type="GO" id="GO:0008652">
    <property type="term" value="P:amino acid biosynthetic process"/>
    <property type="evidence" value="ECO:0007669"/>
    <property type="project" value="UniProtKB-KW"/>
</dbReference>
<dbReference type="GO" id="GO:0009082">
    <property type="term" value="P:branched-chain amino acid biosynthetic process"/>
    <property type="evidence" value="ECO:0007669"/>
    <property type="project" value="UniProtKB-KW"/>
</dbReference>
<dbReference type="InterPro" id="IPR012567">
    <property type="entry name" value="IlvGEDA_leader"/>
</dbReference>
<dbReference type="NCBIfam" id="NF007744">
    <property type="entry name" value="PRK10424.1"/>
    <property type="match status" value="1"/>
</dbReference>
<dbReference type="Pfam" id="PF08046">
    <property type="entry name" value="IlvGEDA_leader"/>
    <property type="match status" value="1"/>
</dbReference>